<feature type="chain" id="PRO_0000213141" description="Membrane-bound O-acyltransferase gup1">
    <location>
        <begin position="1"/>
        <end position="583"/>
    </location>
</feature>
<feature type="topological domain" description="Extracellular" evidence="1">
    <location>
        <begin position="1"/>
        <end position="52"/>
    </location>
</feature>
<feature type="transmembrane region" description="Helical" evidence="2">
    <location>
        <begin position="53"/>
        <end position="73"/>
    </location>
</feature>
<feature type="topological domain" description="Cytoplasmic" evidence="1">
    <location>
        <begin position="74"/>
        <end position="119"/>
    </location>
</feature>
<feature type="transmembrane region" description="Helical" evidence="2">
    <location>
        <begin position="120"/>
        <end position="140"/>
    </location>
</feature>
<feature type="topological domain" description="Extracellular" evidence="1">
    <location>
        <begin position="141"/>
        <end position="159"/>
    </location>
</feature>
<feature type="transmembrane region" description="Helical" evidence="2">
    <location>
        <begin position="160"/>
        <end position="180"/>
    </location>
</feature>
<feature type="topological domain" description="Cytoplasmic" evidence="1">
    <location>
        <begin position="181"/>
        <end position="191"/>
    </location>
</feature>
<feature type="transmembrane region" description="Helical" evidence="2">
    <location>
        <begin position="192"/>
        <end position="212"/>
    </location>
</feature>
<feature type="topological domain" description="Extracellular" evidence="1">
    <location>
        <begin position="213"/>
        <end position="298"/>
    </location>
</feature>
<feature type="transmembrane region" description="Helical" evidence="2">
    <location>
        <begin position="299"/>
        <end position="319"/>
    </location>
</feature>
<feature type="topological domain" description="Cytoplasmic" evidence="1">
    <location>
        <begin position="320"/>
        <end position="343"/>
    </location>
</feature>
<feature type="transmembrane region" description="Helical" evidence="2">
    <location>
        <begin position="344"/>
        <end position="364"/>
    </location>
</feature>
<feature type="topological domain" description="Extracellular" evidence="1">
    <location>
        <begin position="365"/>
        <end position="373"/>
    </location>
</feature>
<feature type="transmembrane region" description="Helical" evidence="2">
    <location>
        <begin position="374"/>
        <end position="394"/>
    </location>
</feature>
<feature type="topological domain" description="Cytoplasmic" evidence="1">
    <location>
        <begin position="395"/>
        <end position="444"/>
    </location>
</feature>
<feature type="transmembrane region" description="Helical" evidence="2">
    <location>
        <begin position="445"/>
        <end position="465"/>
    </location>
</feature>
<feature type="transmembrane region" description="Helical" evidence="2">
    <location>
        <begin position="466"/>
        <end position="486"/>
    </location>
</feature>
<feature type="topological domain" description="Cytoplasmic" evidence="1">
    <location>
        <begin position="487"/>
        <end position="512"/>
    </location>
</feature>
<feature type="transmembrane region" description="Helical" evidence="2">
    <location>
        <begin position="513"/>
        <end position="533"/>
    </location>
</feature>
<feature type="topological domain" description="Extracellular" evidence="1">
    <location>
        <begin position="534"/>
        <end position="549"/>
    </location>
</feature>
<feature type="transmembrane region" description="Helical" evidence="2">
    <location>
        <begin position="550"/>
        <end position="570"/>
    </location>
</feature>
<feature type="topological domain" description="Cytoplasmic" evidence="1">
    <location>
        <begin position="571"/>
        <end position="583"/>
    </location>
</feature>
<feature type="region of interest" description="Disordered" evidence="3">
    <location>
        <begin position="15"/>
        <end position="42"/>
    </location>
</feature>
<feature type="compositionally biased region" description="Low complexity" evidence="3">
    <location>
        <begin position="22"/>
        <end position="40"/>
    </location>
</feature>
<feature type="active site" evidence="1">
    <location>
        <position position="468"/>
    </location>
</feature>
<sequence>MLRLFRFDVLETSTKDTERPNSKSSRLSSTSGSSHPSSSSRLTVRSAVPEKSAFGSIEFIFYFSVILSILTIACFKIHYVSSPKHPNYKNIEKYLKPGWLFGQKVDSADFQYSAFRENMPILLLVIIVYNFLWRLVKLVFTKNTNDELAIKNNYRLCFSLLFALLVYGTGVIYVLTIALINYLISKSLKNSIFNPLLTWTLDISVVFFKEYFAYCKFSSLHPGLGFLDQYTGILERWYVLFNITMLRLVSFNMDYYWSLKHNSEKLNTLIFDKDREPTTLTFRERVDYSCLDEDYNLKNFLTYIFYAPLYLAGPIISFNNFMSQMKYPTVSTLKYRNLLYAIRFLVCVLTMEFLLHYAYVTAISKDGNWNQYSAVESAMISFIVLFMTWLKLLIPWRLFRLWSLIDDIEPPENIVRCMCNNYSAVGFWRAWHRSFNRWLIRYIYVPLGGSNHSILNLFIIFTFVALWHDISWELFAWGWLIVLFILPERLCCFMSRRTGLTKHPYYRYISGFGAALNIYFMIICNLIGFAVGIDGIKNVLVSFFLTLKGAMSAIAAFIMFFSAVQIMFQIRVNEEEEGINLRC</sequence>
<name>GUP1_SCHPO</name>
<organism>
    <name type="scientific">Schizosaccharomyces pombe (strain 972 / ATCC 24843)</name>
    <name type="common">Fission yeast</name>
    <dbReference type="NCBI Taxonomy" id="284812"/>
    <lineage>
        <taxon>Eukaryota</taxon>
        <taxon>Fungi</taxon>
        <taxon>Dikarya</taxon>
        <taxon>Ascomycota</taxon>
        <taxon>Taphrinomycotina</taxon>
        <taxon>Schizosaccharomycetes</taxon>
        <taxon>Schizosaccharomycetales</taxon>
        <taxon>Schizosaccharomycetaceae</taxon>
        <taxon>Schizosaccharomyces</taxon>
    </lineage>
</organism>
<comment type="function">
    <text evidence="1">Membrane-bound O-acyltransferase involved in the remodeling of glycosylphosphatidylinositol (GPI) anchors. Acts only on GPI-anchored proteins, but not on free GPI lipids. Also involved in lipid metabolism, having profound effects on sphingolipid-sterol-ordered domains integrity and assembly. Involved in cell integrity and apoptosis.</text>
</comment>
<comment type="subcellular location">
    <subcellularLocation>
        <location evidence="1">Cell membrane</location>
        <topology evidence="2">Multi-pass membrane protein</topology>
    </subcellularLocation>
    <subcellularLocation>
        <location evidence="1">Endoplasmic reticulum membrane</location>
        <topology evidence="2">Multi-pass membrane protein</topology>
    </subcellularLocation>
    <subcellularLocation>
        <location evidence="1">Mitochondrion membrane</location>
        <topology evidence="2">Multi-pass membrane protein</topology>
    </subcellularLocation>
</comment>
<comment type="similarity">
    <text evidence="4">Belongs to the membrane-bound acyltransferase family.</text>
</comment>
<gene>
    <name type="primary">gup1</name>
    <name type="ORF">SPAC24H6.01c</name>
    <name type="ORF">SPAPB21F2.01</name>
</gene>
<proteinExistence type="inferred from homology"/>
<protein>
    <recommendedName>
        <fullName>Membrane-bound O-acyltransferase gup1</fullName>
    </recommendedName>
    <alternativeName>
        <fullName>Glycerol uptake protein 1</fullName>
    </alternativeName>
</protein>
<dbReference type="EMBL" id="CU329670">
    <property type="protein sequence ID" value="CAA90845.4"/>
    <property type="molecule type" value="Genomic_DNA"/>
</dbReference>
<dbReference type="PIR" id="S62402">
    <property type="entry name" value="S62402"/>
</dbReference>
<dbReference type="RefSeq" id="NP_592951.3">
    <property type="nucleotide sequence ID" value="NM_001018352.3"/>
</dbReference>
<dbReference type="SMR" id="Q09758"/>
<dbReference type="BioGRID" id="278010">
    <property type="interactions" value="2"/>
</dbReference>
<dbReference type="FunCoup" id="Q09758">
    <property type="interactions" value="173"/>
</dbReference>
<dbReference type="STRING" id="284812.Q09758"/>
<dbReference type="PaxDb" id="4896-SPAC24H6.01c.1"/>
<dbReference type="EnsemblFungi" id="SPAC24H6.01c.1">
    <property type="protein sequence ID" value="SPAC24H6.01c.1:pep"/>
    <property type="gene ID" value="SPAC24H6.01c"/>
</dbReference>
<dbReference type="GeneID" id="2541508"/>
<dbReference type="KEGG" id="spo:2541508"/>
<dbReference type="PomBase" id="SPAC24H6.01c">
    <property type="gene designation" value="gup1"/>
</dbReference>
<dbReference type="VEuPathDB" id="FungiDB:SPAC24H6.01c"/>
<dbReference type="eggNOG" id="KOG3860">
    <property type="taxonomic scope" value="Eukaryota"/>
</dbReference>
<dbReference type="HOGENOM" id="CLU_021430_1_1_1"/>
<dbReference type="InParanoid" id="Q09758"/>
<dbReference type="OMA" id="GWHRSYN"/>
<dbReference type="PhylomeDB" id="Q09758"/>
<dbReference type="PRO" id="PR:Q09758"/>
<dbReference type="Proteomes" id="UP000002485">
    <property type="component" value="Chromosome I"/>
</dbReference>
<dbReference type="GO" id="GO:0005829">
    <property type="term" value="C:cytosol"/>
    <property type="evidence" value="ECO:0007005"/>
    <property type="project" value="PomBase"/>
</dbReference>
<dbReference type="GO" id="GO:0005783">
    <property type="term" value="C:endoplasmic reticulum"/>
    <property type="evidence" value="ECO:0000318"/>
    <property type="project" value="GO_Central"/>
</dbReference>
<dbReference type="GO" id="GO:0005789">
    <property type="term" value="C:endoplasmic reticulum membrane"/>
    <property type="evidence" value="ECO:0000266"/>
    <property type="project" value="PomBase"/>
</dbReference>
<dbReference type="GO" id="GO:0031966">
    <property type="term" value="C:mitochondrial membrane"/>
    <property type="evidence" value="ECO:0007669"/>
    <property type="project" value="UniProtKB-SubCell"/>
</dbReference>
<dbReference type="GO" id="GO:0005886">
    <property type="term" value="C:plasma membrane"/>
    <property type="evidence" value="ECO:0000266"/>
    <property type="project" value="PomBase"/>
</dbReference>
<dbReference type="GO" id="GO:0008374">
    <property type="term" value="F:O-acyltransferase activity"/>
    <property type="evidence" value="ECO:0000318"/>
    <property type="project" value="GO_Central"/>
</dbReference>
<dbReference type="GO" id="GO:0006506">
    <property type="term" value="P:GPI anchor biosynthetic process"/>
    <property type="evidence" value="ECO:0000318"/>
    <property type="project" value="GO_Central"/>
</dbReference>
<dbReference type="InterPro" id="IPR051085">
    <property type="entry name" value="MB_O-acyltransferase"/>
</dbReference>
<dbReference type="InterPro" id="IPR004299">
    <property type="entry name" value="MBOAT_fam"/>
</dbReference>
<dbReference type="PANTHER" id="PTHR13285">
    <property type="entry name" value="ACYLTRANSFERASE"/>
    <property type="match status" value="1"/>
</dbReference>
<dbReference type="PANTHER" id="PTHR13285:SF18">
    <property type="entry name" value="PROTEIN-CYSTEINE N-PALMITOYLTRANSFERASE RASP"/>
    <property type="match status" value="1"/>
</dbReference>
<dbReference type="Pfam" id="PF03062">
    <property type="entry name" value="MBOAT"/>
    <property type="match status" value="1"/>
</dbReference>
<evidence type="ECO:0000250" key="1">
    <source>
        <dbReference type="UniProtKB" id="P53154"/>
    </source>
</evidence>
<evidence type="ECO:0000255" key="2"/>
<evidence type="ECO:0000256" key="3">
    <source>
        <dbReference type="SAM" id="MobiDB-lite"/>
    </source>
</evidence>
<evidence type="ECO:0000305" key="4"/>
<reference key="1">
    <citation type="journal article" date="2002" name="Nature">
        <title>The genome sequence of Schizosaccharomyces pombe.</title>
        <authorList>
            <person name="Wood V."/>
            <person name="Gwilliam R."/>
            <person name="Rajandream M.A."/>
            <person name="Lyne M.H."/>
            <person name="Lyne R."/>
            <person name="Stewart A."/>
            <person name="Sgouros J.G."/>
            <person name="Peat N."/>
            <person name="Hayles J."/>
            <person name="Baker S.G."/>
            <person name="Basham D."/>
            <person name="Bowman S."/>
            <person name="Brooks K."/>
            <person name="Brown D."/>
            <person name="Brown S."/>
            <person name="Chillingworth T."/>
            <person name="Churcher C.M."/>
            <person name="Collins M."/>
            <person name="Connor R."/>
            <person name="Cronin A."/>
            <person name="Davis P."/>
            <person name="Feltwell T."/>
            <person name="Fraser A."/>
            <person name="Gentles S."/>
            <person name="Goble A."/>
            <person name="Hamlin N."/>
            <person name="Harris D.E."/>
            <person name="Hidalgo J."/>
            <person name="Hodgson G."/>
            <person name="Holroyd S."/>
            <person name="Hornsby T."/>
            <person name="Howarth S."/>
            <person name="Huckle E.J."/>
            <person name="Hunt S."/>
            <person name="Jagels K."/>
            <person name="James K.D."/>
            <person name="Jones L."/>
            <person name="Jones M."/>
            <person name="Leather S."/>
            <person name="McDonald S."/>
            <person name="McLean J."/>
            <person name="Mooney P."/>
            <person name="Moule S."/>
            <person name="Mungall K.L."/>
            <person name="Murphy L.D."/>
            <person name="Niblett D."/>
            <person name="Odell C."/>
            <person name="Oliver K."/>
            <person name="O'Neil S."/>
            <person name="Pearson D."/>
            <person name="Quail M.A."/>
            <person name="Rabbinowitsch E."/>
            <person name="Rutherford K.M."/>
            <person name="Rutter S."/>
            <person name="Saunders D."/>
            <person name="Seeger K."/>
            <person name="Sharp S."/>
            <person name="Skelton J."/>
            <person name="Simmonds M.N."/>
            <person name="Squares R."/>
            <person name="Squares S."/>
            <person name="Stevens K."/>
            <person name="Taylor K."/>
            <person name="Taylor R.G."/>
            <person name="Tivey A."/>
            <person name="Walsh S.V."/>
            <person name="Warren T."/>
            <person name="Whitehead S."/>
            <person name="Woodward J.R."/>
            <person name="Volckaert G."/>
            <person name="Aert R."/>
            <person name="Robben J."/>
            <person name="Grymonprez B."/>
            <person name="Weltjens I."/>
            <person name="Vanstreels E."/>
            <person name="Rieger M."/>
            <person name="Schaefer M."/>
            <person name="Mueller-Auer S."/>
            <person name="Gabel C."/>
            <person name="Fuchs M."/>
            <person name="Duesterhoeft A."/>
            <person name="Fritzc C."/>
            <person name="Holzer E."/>
            <person name="Moestl D."/>
            <person name="Hilbert H."/>
            <person name="Borzym K."/>
            <person name="Langer I."/>
            <person name="Beck A."/>
            <person name="Lehrach H."/>
            <person name="Reinhardt R."/>
            <person name="Pohl T.M."/>
            <person name="Eger P."/>
            <person name="Zimmermann W."/>
            <person name="Wedler H."/>
            <person name="Wambutt R."/>
            <person name="Purnelle B."/>
            <person name="Goffeau A."/>
            <person name="Cadieu E."/>
            <person name="Dreano S."/>
            <person name="Gloux S."/>
            <person name="Lelaure V."/>
            <person name="Mottier S."/>
            <person name="Galibert F."/>
            <person name="Aves S.J."/>
            <person name="Xiang Z."/>
            <person name="Hunt C."/>
            <person name="Moore K."/>
            <person name="Hurst S.M."/>
            <person name="Lucas M."/>
            <person name="Rochet M."/>
            <person name="Gaillardin C."/>
            <person name="Tallada V.A."/>
            <person name="Garzon A."/>
            <person name="Thode G."/>
            <person name="Daga R.R."/>
            <person name="Cruzado L."/>
            <person name="Jimenez J."/>
            <person name="Sanchez M."/>
            <person name="del Rey F."/>
            <person name="Benito J."/>
            <person name="Dominguez A."/>
            <person name="Revuelta J.L."/>
            <person name="Moreno S."/>
            <person name="Armstrong J."/>
            <person name="Forsburg S.L."/>
            <person name="Cerutti L."/>
            <person name="Lowe T."/>
            <person name="McCombie W.R."/>
            <person name="Paulsen I."/>
            <person name="Potashkin J."/>
            <person name="Shpakovski G.V."/>
            <person name="Ussery D."/>
            <person name="Barrell B.G."/>
            <person name="Nurse P."/>
        </authorList>
    </citation>
    <scope>NUCLEOTIDE SEQUENCE [LARGE SCALE GENOMIC DNA]</scope>
    <source>
        <strain>972 / ATCC 24843</strain>
    </source>
</reference>
<accession>Q09758</accession>
<accession>Q9C0Z5</accession>
<keyword id="KW-0012">Acyltransferase</keyword>
<keyword id="KW-1003">Cell membrane</keyword>
<keyword id="KW-0256">Endoplasmic reticulum</keyword>
<keyword id="KW-0472">Membrane</keyword>
<keyword id="KW-0496">Mitochondrion</keyword>
<keyword id="KW-1185">Reference proteome</keyword>
<keyword id="KW-0808">Transferase</keyword>
<keyword id="KW-0812">Transmembrane</keyword>
<keyword id="KW-1133">Transmembrane helix</keyword>